<gene>
    <name type="primary">PHYD</name>
    <name type="ordered locus">At4g16250</name>
    <name type="ORF">dl4165c</name>
</gene>
<evidence type="ECO:0000250" key="1"/>
<evidence type="ECO:0000255" key="2">
    <source>
        <dbReference type="PROSITE-ProRule" id="PRU00107"/>
    </source>
</evidence>
<evidence type="ECO:0000255" key="3">
    <source>
        <dbReference type="PROSITE-ProRule" id="PRU00140"/>
    </source>
</evidence>
<evidence type="ECO:0000256" key="4">
    <source>
        <dbReference type="SAM" id="MobiDB-lite"/>
    </source>
</evidence>
<evidence type="ECO:0000305" key="5"/>
<sequence length="1164" mass="129268">MVSGGGSKTSGGEAASSGHRRSRHTSAAEQAQSSANKALRSQNQQPQNHGGGTESTNKAIQQYTVDARLHAVFEQSGESGKSFDYSQSLKTAPYDSSVPEQQITAYLSRIQRGGYTQPFGCLIAVEESTFTIIGYSENAREMLGLMSQSVPSIEDKSEVLTIGTDLRSLFKSSSYLLLERAFVAREITLLNPIWIHSNNTGKPFYAILHRVDVGILIDLEPARTEDPALSIAGAVQSQKLAVRAISHLQSLPSGDIKLLCDTVVESVRDLTGYDRVMVYKFHEDEHGEVVAESKRNDLEPYIGLHYPATDIPQASRFLFKQNRVRMIVDCYASPVRVVQDDRLTQFICLVGSTLRAPHGCHAQYMTNMGSIASLAMAVIINGNEEDGNGVNTGGRNSMRLWGLVVCHHTSARCIPFPLRYACEFLMQAFGLQLNMELQLALQVSEKRVLRMQTLLCDMLLRDSPAGIVTQRPSIMDLVKCNGAAFLYQGKYYPLGVTPTDSQINDIVEWLVANHSDSTGLSTDSLGDAGYPRAAALGDAVCGMAVACITKRDFLFWFRSHTEKEIKWGGAKHHPEDKDDGQRMNPRSSFQTFLEVVKSRCQPWETAEMDAIHSLQLILRDSFKESEAMDSKAAAAGAVQPHGDDMVQQGMQEIGAVAREMVRLIETATVPIFAVDIDGCINGWNAKIAELTGLSVEDAMGKSLVRELIYKEYKETVDRLLSCALKGDEGKNVEVKLKTFGSELQGKAMFVVVNACSSKDYLNNIVGVCFVGQDVTGHKIVMDKFINIQGDYKAIIHSPNPLIPPIFAADENTCCLEWNTAMEKLTGWPRSEVIGKLLVREVFGSYCRLKGPDALTKFMIVLHNAIGGQDTDKFPFPFFDRKGEFIQALLTLNKRVSIDGKIIGAFCFLQIPSPELQQALEVQRRQESEYFSRRKELAYIFQVIKNPLSGLRFTNSLLEDMDLNEDQKQLLETSVSCEKQISKIVGDMDVKSIDDGSFLLERTEFFIGNVTNAVVSQVMLVVRERNLQLIRNIPTEVKSMAVYGDQIRLQQVLAEFLLSIVRYAPMEGSVELHLCPTLNQMADGFSAVRLEFRMACAGEGVPPEKVQDMFHSSRWTSPEGLGLSVCRKILKLMNGGVQYIREFERSYFLIVIELPVPLMMMMPSS</sequence>
<proteinExistence type="evidence at protein level"/>
<dbReference type="EMBL" id="X76609">
    <property type="protein sequence ID" value="CAA54072.1"/>
    <property type="molecule type" value="Genomic_DNA"/>
</dbReference>
<dbReference type="EMBL" id="Z97340">
    <property type="protein sequence ID" value="CAB10404.1"/>
    <property type="molecule type" value="Genomic_DNA"/>
</dbReference>
<dbReference type="EMBL" id="AL161543">
    <property type="protein sequence ID" value="CAB78667.1"/>
    <property type="molecule type" value="Genomic_DNA"/>
</dbReference>
<dbReference type="EMBL" id="CP002687">
    <property type="protein sequence ID" value="AEE83721.1"/>
    <property type="molecule type" value="Genomic_DNA"/>
</dbReference>
<dbReference type="PIR" id="B71429">
    <property type="entry name" value="B71429"/>
</dbReference>
<dbReference type="RefSeq" id="NP_193360.1">
    <property type="nucleotide sequence ID" value="NM_117721.2"/>
</dbReference>
<dbReference type="SMR" id="P42497"/>
<dbReference type="BioGRID" id="12613">
    <property type="interactions" value="9"/>
</dbReference>
<dbReference type="FunCoup" id="P42497">
    <property type="interactions" value="279"/>
</dbReference>
<dbReference type="IntAct" id="P42497">
    <property type="interactions" value="4"/>
</dbReference>
<dbReference type="STRING" id="3702.P42497"/>
<dbReference type="GlyGen" id="P42497">
    <property type="glycosylation" value="1 site"/>
</dbReference>
<dbReference type="iPTMnet" id="P42497"/>
<dbReference type="PaxDb" id="3702-AT4G16250.1"/>
<dbReference type="ProteomicsDB" id="235020"/>
<dbReference type="EnsemblPlants" id="AT4G16250.1">
    <property type="protein sequence ID" value="AT4G16250.1"/>
    <property type="gene ID" value="AT4G16250"/>
</dbReference>
<dbReference type="GeneID" id="827319"/>
<dbReference type="Gramene" id="AT4G16250.1">
    <property type="protein sequence ID" value="AT4G16250.1"/>
    <property type="gene ID" value="AT4G16250"/>
</dbReference>
<dbReference type="KEGG" id="ath:AT4G16250"/>
<dbReference type="Araport" id="AT4G16250"/>
<dbReference type="TAIR" id="AT4G16250">
    <property type="gene designation" value="PHYD"/>
</dbReference>
<dbReference type="eggNOG" id="ENOG502QPNJ">
    <property type="taxonomic scope" value="Eukaryota"/>
</dbReference>
<dbReference type="HOGENOM" id="CLU_010418_0_0_1"/>
<dbReference type="InParanoid" id="P42497"/>
<dbReference type="OMA" id="GWPRSEV"/>
<dbReference type="OrthoDB" id="2015534at2759"/>
<dbReference type="PhylomeDB" id="P42497"/>
<dbReference type="PRO" id="PR:P42497"/>
<dbReference type="Proteomes" id="UP000006548">
    <property type="component" value="Chromosome 4"/>
</dbReference>
<dbReference type="ExpressionAtlas" id="P42497">
    <property type="expression patterns" value="baseline and differential"/>
</dbReference>
<dbReference type="GO" id="GO:0005634">
    <property type="term" value="C:nucleus"/>
    <property type="evidence" value="ECO:0000314"/>
    <property type="project" value="TAIR"/>
</dbReference>
<dbReference type="GO" id="GO:0042802">
    <property type="term" value="F:identical protein binding"/>
    <property type="evidence" value="ECO:0000353"/>
    <property type="project" value="IntAct"/>
</dbReference>
<dbReference type="GO" id="GO:0000155">
    <property type="term" value="F:phosphorelay sensor kinase activity"/>
    <property type="evidence" value="ECO:0007669"/>
    <property type="project" value="InterPro"/>
</dbReference>
<dbReference type="GO" id="GO:0009881">
    <property type="term" value="F:photoreceptor activity"/>
    <property type="evidence" value="ECO:0007669"/>
    <property type="project" value="UniProtKB-KW"/>
</dbReference>
<dbReference type="GO" id="GO:0042803">
    <property type="term" value="F:protein homodimerization activity"/>
    <property type="evidence" value="ECO:0007669"/>
    <property type="project" value="InterPro"/>
</dbReference>
<dbReference type="GO" id="GO:0009584">
    <property type="term" value="P:detection of visible light"/>
    <property type="evidence" value="ECO:0007669"/>
    <property type="project" value="InterPro"/>
</dbReference>
<dbReference type="GO" id="GO:0009585">
    <property type="term" value="P:red, far-red light phototransduction"/>
    <property type="evidence" value="ECO:0007669"/>
    <property type="project" value="InterPro"/>
</dbReference>
<dbReference type="GO" id="GO:0006355">
    <property type="term" value="P:regulation of DNA-templated transcription"/>
    <property type="evidence" value="ECO:0007669"/>
    <property type="project" value="InterPro"/>
</dbReference>
<dbReference type="CDD" id="cd16932">
    <property type="entry name" value="HATPase_Phy-like"/>
    <property type="match status" value="1"/>
</dbReference>
<dbReference type="CDD" id="cd00082">
    <property type="entry name" value="HisKA"/>
    <property type="match status" value="1"/>
</dbReference>
<dbReference type="CDD" id="cd00130">
    <property type="entry name" value="PAS"/>
    <property type="match status" value="2"/>
</dbReference>
<dbReference type="FunFam" id="3.30.450.20:FF:000034">
    <property type="entry name" value="Phytochrome"/>
    <property type="match status" value="1"/>
</dbReference>
<dbReference type="FunFam" id="3.30.450.20:FF:000039">
    <property type="entry name" value="Phytochrome"/>
    <property type="match status" value="1"/>
</dbReference>
<dbReference type="FunFam" id="3.30.450.270:FF:000001">
    <property type="entry name" value="Phytochrome"/>
    <property type="match status" value="1"/>
</dbReference>
<dbReference type="FunFam" id="3.30.565.10:FF:000044">
    <property type="entry name" value="Phytochrome"/>
    <property type="match status" value="1"/>
</dbReference>
<dbReference type="Gene3D" id="3.30.450.270">
    <property type="match status" value="1"/>
</dbReference>
<dbReference type="Gene3D" id="3.30.450.40">
    <property type="match status" value="1"/>
</dbReference>
<dbReference type="Gene3D" id="3.30.565.10">
    <property type="entry name" value="Histidine kinase-like ATPase, C-terminal domain"/>
    <property type="match status" value="1"/>
</dbReference>
<dbReference type="Gene3D" id="3.30.450.20">
    <property type="entry name" value="PAS domain"/>
    <property type="match status" value="3"/>
</dbReference>
<dbReference type="InterPro" id="IPR003018">
    <property type="entry name" value="GAF"/>
</dbReference>
<dbReference type="InterPro" id="IPR029016">
    <property type="entry name" value="GAF-like_dom_sf"/>
</dbReference>
<dbReference type="InterPro" id="IPR036890">
    <property type="entry name" value="HATPase_C_sf"/>
</dbReference>
<dbReference type="InterPro" id="IPR005467">
    <property type="entry name" value="His_kinase_dom"/>
</dbReference>
<dbReference type="InterPro" id="IPR003661">
    <property type="entry name" value="HisK_dim/P_dom"/>
</dbReference>
<dbReference type="InterPro" id="IPR000014">
    <property type="entry name" value="PAS"/>
</dbReference>
<dbReference type="InterPro" id="IPR035965">
    <property type="entry name" value="PAS-like_dom_sf"/>
</dbReference>
<dbReference type="InterPro" id="IPR013654">
    <property type="entry name" value="PAS_2"/>
</dbReference>
<dbReference type="InterPro" id="IPR013767">
    <property type="entry name" value="PAS_fold"/>
</dbReference>
<dbReference type="InterPro" id="IPR044767">
    <property type="entry name" value="Phy_HATPase-like"/>
</dbReference>
<dbReference type="InterPro" id="IPR016132">
    <property type="entry name" value="Phyto_chromo_attachment"/>
</dbReference>
<dbReference type="InterPro" id="IPR013516">
    <property type="entry name" value="Phyto_chromo_BS"/>
</dbReference>
<dbReference type="InterPro" id="IPR001294">
    <property type="entry name" value="Phytochrome"/>
</dbReference>
<dbReference type="InterPro" id="IPR012129">
    <property type="entry name" value="Phytochrome_A-E"/>
</dbReference>
<dbReference type="InterPro" id="IPR013515">
    <property type="entry name" value="Phytochrome_cen-reg"/>
</dbReference>
<dbReference type="InterPro" id="IPR043150">
    <property type="entry name" value="Phytochrome_PHY_sf"/>
</dbReference>
<dbReference type="NCBIfam" id="TIGR00229">
    <property type="entry name" value="sensory_box"/>
    <property type="match status" value="1"/>
</dbReference>
<dbReference type="PANTHER" id="PTHR47876">
    <property type="entry name" value="OS08G0260000 PROTEIN"/>
    <property type="match status" value="1"/>
</dbReference>
<dbReference type="PANTHER" id="PTHR47876:SF3">
    <property type="entry name" value="PHYTOCHROME 1"/>
    <property type="match status" value="1"/>
</dbReference>
<dbReference type="Pfam" id="PF01590">
    <property type="entry name" value="GAF"/>
    <property type="match status" value="1"/>
</dbReference>
<dbReference type="Pfam" id="PF02518">
    <property type="entry name" value="HATPase_c"/>
    <property type="match status" value="1"/>
</dbReference>
<dbReference type="Pfam" id="PF00512">
    <property type="entry name" value="HisKA"/>
    <property type="match status" value="1"/>
</dbReference>
<dbReference type="Pfam" id="PF00989">
    <property type="entry name" value="PAS"/>
    <property type="match status" value="2"/>
</dbReference>
<dbReference type="Pfam" id="PF08446">
    <property type="entry name" value="PAS_2"/>
    <property type="match status" value="1"/>
</dbReference>
<dbReference type="Pfam" id="PF00360">
    <property type="entry name" value="PHY"/>
    <property type="match status" value="1"/>
</dbReference>
<dbReference type="PIRSF" id="PIRSF000084">
    <property type="entry name" value="Phytochrome"/>
    <property type="match status" value="1"/>
</dbReference>
<dbReference type="PRINTS" id="PR01033">
    <property type="entry name" value="PHYTOCHROME"/>
</dbReference>
<dbReference type="SMART" id="SM00065">
    <property type="entry name" value="GAF"/>
    <property type="match status" value="1"/>
</dbReference>
<dbReference type="SMART" id="SM00387">
    <property type="entry name" value="HATPase_c"/>
    <property type="match status" value="1"/>
</dbReference>
<dbReference type="SMART" id="SM00388">
    <property type="entry name" value="HisKA"/>
    <property type="match status" value="1"/>
</dbReference>
<dbReference type="SMART" id="SM00091">
    <property type="entry name" value="PAS"/>
    <property type="match status" value="2"/>
</dbReference>
<dbReference type="SUPFAM" id="SSF55874">
    <property type="entry name" value="ATPase domain of HSP90 chaperone/DNA topoisomerase II/histidine kinase"/>
    <property type="match status" value="1"/>
</dbReference>
<dbReference type="SUPFAM" id="SSF55781">
    <property type="entry name" value="GAF domain-like"/>
    <property type="match status" value="2"/>
</dbReference>
<dbReference type="SUPFAM" id="SSF55785">
    <property type="entry name" value="PYP-like sensor domain (PAS domain)"/>
    <property type="match status" value="3"/>
</dbReference>
<dbReference type="PROSITE" id="PS50109">
    <property type="entry name" value="HIS_KIN"/>
    <property type="match status" value="1"/>
</dbReference>
<dbReference type="PROSITE" id="PS50112">
    <property type="entry name" value="PAS"/>
    <property type="match status" value="2"/>
</dbReference>
<dbReference type="PROSITE" id="PS00245">
    <property type="entry name" value="PHYTOCHROME_1"/>
    <property type="match status" value="1"/>
</dbReference>
<dbReference type="PROSITE" id="PS50046">
    <property type="entry name" value="PHYTOCHROME_2"/>
    <property type="match status" value="1"/>
</dbReference>
<accession>P42497</accession>
<accession>O23472</accession>
<reference key="1">
    <citation type="journal article" date="1994" name="Plant Mol. Biol.">
        <title>The phytochrome apoprotein family in Arabidopsis is encoded by five genes: the sequences and expression of PHYD and PHYE.</title>
        <authorList>
            <person name="Clack T."/>
            <person name="Mathews S."/>
            <person name="Sharrock R.A."/>
        </authorList>
    </citation>
    <scope>NUCLEOTIDE SEQUENCE [GENOMIC DNA]</scope>
    <source>
        <strain>cv. Landsberg erecta</strain>
    </source>
</reference>
<reference key="2">
    <citation type="journal article" date="1998" name="Nature">
        <title>Analysis of 1.9 Mb of contiguous sequence from chromosome 4 of Arabidopsis thaliana.</title>
        <authorList>
            <person name="Bevan M."/>
            <person name="Bancroft I."/>
            <person name="Bent E."/>
            <person name="Love K."/>
            <person name="Goodman H.M."/>
            <person name="Dean C."/>
            <person name="Bergkamp R."/>
            <person name="Dirkse W."/>
            <person name="van Staveren M."/>
            <person name="Stiekema W."/>
            <person name="Drost L."/>
            <person name="Ridley P."/>
            <person name="Hudson S.-A."/>
            <person name="Patel K."/>
            <person name="Murphy G."/>
            <person name="Piffanelli P."/>
            <person name="Wedler H."/>
            <person name="Wedler E."/>
            <person name="Wambutt R."/>
            <person name="Weitzenegger T."/>
            <person name="Pohl T."/>
            <person name="Terryn N."/>
            <person name="Gielen J."/>
            <person name="Villarroel R."/>
            <person name="De Clercq R."/>
            <person name="van Montagu M."/>
            <person name="Lecharny A."/>
            <person name="Aubourg S."/>
            <person name="Gy I."/>
            <person name="Kreis M."/>
            <person name="Lao N."/>
            <person name="Kavanagh T."/>
            <person name="Hempel S."/>
            <person name="Kotter P."/>
            <person name="Entian K.-D."/>
            <person name="Rieger M."/>
            <person name="Schaefer M."/>
            <person name="Funk B."/>
            <person name="Mueller-Auer S."/>
            <person name="Silvey M."/>
            <person name="James R."/>
            <person name="Monfort A."/>
            <person name="Pons A."/>
            <person name="Puigdomenech P."/>
            <person name="Douka A."/>
            <person name="Voukelatou E."/>
            <person name="Milioni D."/>
            <person name="Hatzopoulos P."/>
            <person name="Piravandi E."/>
            <person name="Obermaier B."/>
            <person name="Hilbert H."/>
            <person name="Duesterhoeft A."/>
            <person name="Moores T."/>
            <person name="Jones J.D.G."/>
            <person name="Eneva T."/>
            <person name="Palme K."/>
            <person name="Benes V."/>
            <person name="Rechmann S."/>
            <person name="Ansorge W."/>
            <person name="Cooke R."/>
            <person name="Berger C."/>
            <person name="Delseny M."/>
            <person name="Voet M."/>
            <person name="Volckaert G."/>
            <person name="Mewes H.-W."/>
            <person name="Klosterman S."/>
            <person name="Schueller C."/>
            <person name="Chalwatzis N."/>
        </authorList>
    </citation>
    <scope>NUCLEOTIDE SEQUENCE [LARGE SCALE GENOMIC DNA]</scope>
    <source>
        <strain>cv. Columbia</strain>
    </source>
</reference>
<reference key="3">
    <citation type="journal article" date="1999" name="Nature">
        <title>Sequence and analysis of chromosome 4 of the plant Arabidopsis thaliana.</title>
        <authorList>
            <person name="Mayer K.F.X."/>
            <person name="Schueller C."/>
            <person name="Wambutt R."/>
            <person name="Murphy G."/>
            <person name="Volckaert G."/>
            <person name="Pohl T."/>
            <person name="Duesterhoeft A."/>
            <person name="Stiekema W."/>
            <person name="Entian K.-D."/>
            <person name="Terryn N."/>
            <person name="Harris B."/>
            <person name="Ansorge W."/>
            <person name="Brandt P."/>
            <person name="Grivell L.A."/>
            <person name="Rieger M."/>
            <person name="Weichselgartner M."/>
            <person name="de Simone V."/>
            <person name="Obermaier B."/>
            <person name="Mache R."/>
            <person name="Mueller M."/>
            <person name="Kreis M."/>
            <person name="Delseny M."/>
            <person name="Puigdomenech P."/>
            <person name="Watson M."/>
            <person name="Schmidtheini T."/>
            <person name="Reichert B."/>
            <person name="Portetelle D."/>
            <person name="Perez-Alonso M."/>
            <person name="Boutry M."/>
            <person name="Bancroft I."/>
            <person name="Vos P."/>
            <person name="Hoheisel J."/>
            <person name="Zimmermann W."/>
            <person name="Wedler H."/>
            <person name="Ridley P."/>
            <person name="Langham S.-A."/>
            <person name="McCullagh B."/>
            <person name="Bilham L."/>
            <person name="Robben J."/>
            <person name="van der Schueren J."/>
            <person name="Grymonprez B."/>
            <person name="Chuang Y.-J."/>
            <person name="Vandenbussche F."/>
            <person name="Braeken M."/>
            <person name="Weltjens I."/>
            <person name="Voet M."/>
            <person name="Bastiaens I."/>
            <person name="Aert R."/>
            <person name="Defoor E."/>
            <person name="Weitzenegger T."/>
            <person name="Bothe G."/>
            <person name="Ramsperger U."/>
            <person name="Hilbert H."/>
            <person name="Braun M."/>
            <person name="Holzer E."/>
            <person name="Brandt A."/>
            <person name="Peters S."/>
            <person name="van Staveren M."/>
            <person name="Dirkse W."/>
            <person name="Mooijman P."/>
            <person name="Klein Lankhorst R."/>
            <person name="Rose M."/>
            <person name="Hauf J."/>
            <person name="Koetter P."/>
            <person name="Berneiser S."/>
            <person name="Hempel S."/>
            <person name="Feldpausch M."/>
            <person name="Lamberth S."/>
            <person name="Van den Daele H."/>
            <person name="De Keyser A."/>
            <person name="Buysshaert C."/>
            <person name="Gielen J."/>
            <person name="Villarroel R."/>
            <person name="De Clercq R."/>
            <person name="van Montagu M."/>
            <person name="Rogers J."/>
            <person name="Cronin A."/>
            <person name="Quail M.A."/>
            <person name="Bray-Allen S."/>
            <person name="Clark L."/>
            <person name="Doggett J."/>
            <person name="Hall S."/>
            <person name="Kay M."/>
            <person name="Lennard N."/>
            <person name="McLay K."/>
            <person name="Mayes R."/>
            <person name="Pettett A."/>
            <person name="Rajandream M.A."/>
            <person name="Lyne M."/>
            <person name="Benes V."/>
            <person name="Rechmann S."/>
            <person name="Borkova D."/>
            <person name="Bloecker H."/>
            <person name="Scharfe M."/>
            <person name="Grimm M."/>
            <person name="Loehnert T.-H."/>
            <person name="Dose S."/>
            <person name="de Haan M."/>
            <person name="Maarse A.C."/>
            <person name="Schaefer M."/>
            <person name="Mueller-Auer S."/>
            <person name="Gabel C."/>
            <person name="Fuchs M."/>
            <person name="Fartmann B."/>
            <person name="Granderath K."/>
            <person name="Dauner D."/>
            <person name="Herzl A."/>
            <person name="Neumann S."/>
            <person name="Argiriou A."/>
            <person name="Vitale D."/>
            <person name="Liguori R."/>
            <person name="Piravandi E."/>
            <person name="Massenet O."/>
            <person name="Quigley F."/>
            <person name="Clabauld G."/>
            <person name="Muendlein A."/>
            <person name="Felber R."/>
            <person name="Schnabl S."/>
            <person name="Hiller R."/>
            <person name="Schmidt W."/>
            <person name="Lecharny A."/>
            <person name="Aubourg S."/>
            <person name="Chefdor F."/>
            <person name="Cooke R."/>
            <person name="Berger C."/>
            <person name="Monfort A."/>
            <person name="Casacuberta E."/>
            <person name="Gibbons T."/>
            <person name="Weber N."/>
            <person name="Vandenbol M."/>
            <person name="Bargues M."/>
            <person name="Terol J."/>
            <person name="Torres A."/>
            <person name="Perez-Perez A."/>
            <person name="Purnelle B."/>
            <person name="Bent E."/>
            <person name="Johnson S."/>
            <person name="Tacon D."/>
            <person name="Jesse T."/>
            <person name="Heijnen L."/>
            <person name="Schwarz S."/>
            <person name="Scholler P."/>
            <person name="Heber S."/>
            <person name="Francs P."/>
            <person name="Bielke C."/>
            <person name="Frishman D."/>
            <person name="Haase D."/>
            <person name="Lemcke K."/>
            <person name="Mewes H.-W."/>
            <person name="Stocker S."/>
            <person name="Zaccaria P."/>
            <person name="Bevan M."/>
            <person name="Wilson R.K."/>
            <person name="de la Bastide M."/>
            <person name="Habermann K."/>
            <person name="Parnell L."/>
            <person name="Dedhia N."/>
            <person name="Gnoj L."/>
            <person name="Schutz K."/>
            <person name="Huang E."/>
            <person name="Spiegel L."/>
            <person name="Sekhon M."/>
            <person name="Murray J."/>
            <person name="Sheet P."/>
            <person name="Cordes M."/>
            <person name="Abu-Threideh J."/>
            <person name="Stoneking T."/>
            <person name="Kalicki J."/>
            <person name="Graves T."/>
            <person name="Harmon G."/>
            <person name="Edwards J."/>
            <person name="Latreille P."/>
            <person name="Courtney L."/>
            <person name="Cloud J."/>
            <person name="Abbott A."/>
            <person name="Scott K."/>
            <person name="Johnson D."/>
            <person name="Minx P."/>
            <person name="Bentley D."/>
            <person name="Fulton B."/>
            <person name="Miller N."/>
            <person name="Greco T."/>
            <person name="Kemp K."/>
            <person name="Kramer J."/>
            <person name="Fulton L."/>
            <person name="Mardis E."/>
            <person name="Dante M."/>
            <person name="Pepin K."/>
            <person name="Hillier L.W."/>
            <person name="Nelson J."/>
            <person name="Spieth J."/>
            <person name="Ryan E."/>
            <person name="Andrews S."/>
            <person name="Geisel C."/>
            <person name="Layman D."/>
            <person name="Du H."/>
            <person name="Ali J."/>
            <person name="Berghoff A."/>
            <person name="Jones K."/>
            <person name="Drone K."/>
            <person name="Cotton M."/>
            <person name="Joshu C."/>
            <person name="Antonoiu B."/>
            <person name="Zidanic M."/>
            <person name="Strong C."/>
            <person name="Sun H."/>
            <person name="Lamar B."/>
            <person name="Yordan C."/>
            <person name="Ma P."/>
            <person name="Zhong J."/>
            <person name="Preston R."/>
            <person name="Vil D."/>
            <person name="Shekher M."/>
            <person name="Matero A."/>
            <person name="Shah R."/>
            <person name="Swaby I.K."/>
            <person name="O'Shaughnessy A."/>
            <person name="Rodriguez M."/>
            <person name="Hoffman J."/>
            <person name="Till S."/>
            <person name="Granat S."/>
            <person name="Shohdy N."/>
            <person name="Hasegawa A."/>
            <person name="Hameed A."/>
            <person name="Lodhi M."/>
            <person name="Johnson A."/>
            <person name="Chen E."/>
            <person name="Marra M.A."/>
            <person name="Martienssen R."/>
            <person name="McCombie W.R."/>
        </authorList>
    </citation>
    <scope>NUCLEOTIDE SEQUENCE [LARGE SCALE GENOMIC DNA]</scope>
    <source>
        <strain>cv. Columbia</strain>
    </source>
</reference>
<reference key="4">
    <citation type="journal article" date="2017" name="Plant J.">
        <title>Araport11: a complete reannotation of the Arabidopsis thaliana reference genome.</title>
        <authorList>
            <person name="Cheng C.Y."/>
            <person name="Krishnakumar V."/>
            <person name="Chan A.P."/>
            <person name="Thibaud-Nissen F."/>
            <person name="Schobel S."/>
            <person name="Town C.D."/>
        </authorList>
    </citation>
    <scope>GENOME REANNOTATION</scope>
    <source>
        <strain>cv. Columbia</strain>
    </source>
</reference>
<protein>
    <recommendedName>
        <fullName>Phytochrome D</fullName>
    </recommendedName>
</protein>
<keyword id="KW-0157">Chromophore</keyword>
<keyword id="KW-0600">Photoreceptor protein</keyword>
<keyword id="KW-0675">Receptor</keyword>
<keyword id="KW-1185">Reference proteome</keyword>
<keyword id="KW-0677">Repeat</keyword>
<keyword id="KW-0716">Sensory transduction</keyword>
<keyword id="KW-0804">Transcription</keyword>
<keyword id="KW-0805">Transcription regulation</keyword>
<name>PHYD_ARATH</name>
<organism>
    <name type="scientific">Arabidopsis thaliana</name>
    <name type="common">Mouse-ear cress</name>
    <dbReference type="NCBI Taxonomy" id="3702"/>
    <lineage>
        <taxon>Eukaryota</taxon>
        <taxon>Viridiplantae</taxon>
        <taxon>Streptophyta</taxon>
        <taxon>Embryophyta</taxon>
        <taxon>Tracheophyta</taxon>
        <taxon>Spermatophyta</taxon>
        <taxon>Magnoliopsida</taxon>
        <taxon>eudicotyledons</taxon>
        <taxon>Gunneridae</taxon>
        <taxon>Pentapetalae</taxon>
        <taxon>rosids</taxon>
        <taxon>malvids</taxon>
        <taxon>Brassicales</taxon>
        <taxon>Brassicaceae</taxon>
        <taxon>Camelineae</taxon>
        <taxon>Arabidopsis</taxon>
    </lineage>
</organism>
<comment type="function">
    <text>Regulatory photoreceptor which exists in two forms that are reversibly interconvertible by light: the Pr form that absorbs maximally in the red region of the spectrum and the Pfr form that absorbs maximally in the far-red region. Photoconversion of Pr to Pfr induces an array of morphogenic responses, whereas reconversion of Pfr to Pr cancels the induction of those responses. Pfr controls the expression of a number of nuclear genes including those encoding the small subunit of ribulose-bisphosphate carboxylase, chlorophyll A/B binding protein, protochlorophyllide reductase, rRNA, etc. It also controls the expression of its own gene(s) in a negative feedback fashion.</text>
</comment>
<comment type="subunit">
    <text>Homodimer.</text>
</comment>
<comment type="interaction">
    <interactant intactId="EBI-624382">
        <id>P42497</id>
    </interactant>
    <interactant intactId="EBI-300727">
        <id>P14713</id>
        <label>PHYB</label>
    </interactant>
    <organismsDiffer>false</organismsDiffer>
    <experiments>6</experiments>
</comment>
<comment type="interaction">
    <interactant intactId="EBI-624382">
        <id>P42497</id>
    </interactant>
    <interactant intactId="EBI-624366">
        <id>P14714</id>
        <label>PHYC</label>
    </interactant>
    <organismsDiffer>false</organismsDiffer>
    <experiments>2</experiments>
</comment>
<comment type="interaction">
    <interactant intactId="EBI-624382">
        <id>P42497</id>
    </interactant>
    <interactant intactId="EBI-624382">
        <id>P42497</id>
        <label>PHYD</label>
    </interactant>
    <organismsDiffer>false</organismsDiffer>
    <experiments>2</experiments>
</comment>
<comment type="interaction">
    <interactant intactId="EBI-624382">
        <id>P42497</id>
    </interactant>
    <interactant intactId="EBI-624404">
        <id>P42498</id>
        <label>PHYE</label>
    </interactant>
    <organismsDiffer>false</organismsDiffer>
    <experiments>4</experiments>
</comment>
<comment type="PTM">
    <text evidence="1">Contains one covalently linked phytochromobilin chromophore.</text>
</comment>
<comment type="similarity">
    <text evidence="5">Belongs to the phytochrome family.</text>
</comment>
<feature type="chain" id="PRO_0000171965" description="Phytochrome D">
    <location>
        <begin position="1"/>
        <end position="1164"/>
    </location>
</feature>
<feature type="domain" description="GAF">
    <location>
        <begin position="255"/>
        <end position="437"/>
    </location>
</feature>
<feature type="domain" description="PAS 1" evidence="3">
    <location>
        <begin position="656"/>
        <end position="727"/>
    </location>
</feature>
<feature type="domain" description="PAS 2" evidence="3">
    <location>
        <begin position="790"/>
        <end position="861"/>
    </location>
</feature>
<feature type="domain" description="Histidine kinase" evidence="2">
    <location>
        <begin position="938"/>
        <end position="1157"/>
    </location>
</feature>
<feature type="region of interest" description="Disordered" evidence="4">
    <location>
        <begin position="1"/>
        <end position="55"/>
    </location>
</feature>
<feature type="compositionally biased region" description="Polar residues" evidence="4">
    <location>
        <begin position="25"/>
        <end position="55"/>
    </location>
</feature>
<feature type="binding site" description="covalent" evidence="1">
    <location>
        <position position="360"/>
    </location>
    <ligand>
        <name>phytochromobilin</name>
        <dbReference type="ChEBI" id="CHEBI:189064"/>
    </ligand>
</feature>
<feature type="sequence conflict" description="In Ref. 1; CAA54072." evidence="5" ref="1">
    <original>L</original>
    <variation>F</variation>
    <location>
        <position position="425"/>
    </location>
</feature>